<organism>
    <name type="scientific">Pinus thunbergii</name>
    <name type="common">Japanese black pine</name>
    <name type="synonym">Pinus thunbergiana</name>
    <dbReference type="NCBI Taxonomy" id="3350"/>
    <lineage>
        <taxon>Eukaryota</taxon>
        <taxon>Viridiplantae</taxon>
        <taxon>Streptophyta</taxon>
        <taxon>Embryophyta</taxon>
        <taxon>Tracheophyta</taxon>
        <taxon>Spermatophyta</taxon>
        <taxon>Pinopsida</taxon>
        <taxon>Pinidae</taxon>
        <taxon>Conifers I</taxon>
        <taxon>Pinales</taxon>
        <taxon>Pinaceae</taxon>
        <taxon>Pinus</taxon>
        <taxon>Pinus subgen. Pinus</taxon>
    </lineage>
</organism>
<accession>P41638</accession>
<evidence type="ECO:0000250" key="1"/>
<evidence type="ECO:0000256" key="2">
    <source>
        <dbReference type="SAM" id="MobiDB-lite"/>
    </source>
</evidence>
<evidence type="ECO:0000305" key="3"/>
<feature type="chain" id="PRO_0000132653" description="Small ribosomal subunit protein uS4c">
    <location>
        <begin position="1"/>
        <end position="198"/>
    </location>
</feature>
<feature type="domain" description="S4 RNA-binding">
    <location>
        <begin position="88"/>
        <end position="154"/>
    </location>
</feature>
<feature type="region of interest" description="Disordered" evidence="2">
    <location>
        <begin position="17"/>
        <end position="40"/>
    </location>
</feature>
<keyword id="KW-0150">Chloroplast</keyword>
<keyword id="KW-0934">Plastid</keyword>
<keyword id="KW-0687">Ribonucleoprotein</keyword>
<keyword id="KW-0689">Ribosomal protein</keyword>
<keyword id="KW-0694">RNA-binding</keyword>
<keyword id="KW-0699">rRNA-binding</keyword>
<comment type="function">
    <text evidence="1">One of the primary rRNA binding proteins, it binds directly to 16S rRNA where it nucleates assembly of the body of the 30S subunit.</text>
</comment>
<comment type="function">
    <text evidence="1">With S5 and S12 plays an important role in translational accuracy.</text>
</comment>
<comment type="subunit">
    <text evidence="1">Part of the 30S ribosomal subunit. Contacts protein S5. The interaction surface between S4 and S5 is involved in control of translational fidelity (By similarity).</text>
</comment>
<comment type="subcellular location">
    <subcellularLocation>
        <location>Plastid</location>
        <location>Chloroplast</location>
    </subcellularLocation>
</comment>
<comment type="similarity">
    <text evidence="3">Belongs to the universal ribosomal protein uS4 family.</text>
</comment>
<proteinExistence type="inferred from homology"/>
<sequence>MSRYRGPRLKIIRRLKTLPGLTSKRPKNRKDSMNRSSSRKISQYRIRLEEKQKLRFHYGLTERQLLKYVRIARRAKGSRVRSIAITEMRLDKSFSIGYGSTSGARQLVNHGHIRVNDHMVDIPSYPCKPQDVITIRDQQRLRAIIKKNIDLFQRDKLPNHLTFHSLQYKGFINQIIDSKWINLKINELLVVEYYSRQA</sequence>
<reference key="1">
    <citation type="journal article" date="1994" name="Proc. Natl. Acad. Sci. U.S.A.">
        <title>Loss of all ndh genes as determined by sequencing the entire chloroplast genome of the black pine Pinus thunbergii.</title>
        <authorList>
            <person name="Wakasugi T."/>
            <person name="Tsudzuki J."/>
            <person name="Ito S."/>
            <person name="Nakashima K."/>
            <person name="Tsudzuki T."/>
            <person name="Sugiura M."/>
        </authorList>
    </citation>
    <scope>NUCLEOTIDE SEQUENCE [LARGE SCALE GENOMIC DNA]</scope>
</reference>
<geneLocation type="chloroplast"/>
<gene>
    <name type="primary">rps4</name>
</gene>
<dbReference type="EMBL" id="D17510">
    <property type="protein sequence ID" value="BAA04412.1"/>
    <property type="molecule type" value="Genomic_DNA"/>
</dbReference>
<dbReference type="PIR" id="T07536">
    <property type="entry name" value="T07536"/>
</dbReference>
<dbReference type="RefSeq" id="NP_042457.1">
    <property type="nucleotide sequence ID" value="NC_001631.1"/>
</dbReference>
<dbReference type="SMR" id="P41638"/>
<dbReference type="GeneID" id="809000"/>
<dbReference type="GO" id="GO:0009507">
    <property type="term" value="C:chloroplast"/>
    <property type="evidence" value="ECO:0007669"/>
    <property type="project" value="UniProtKB-SubCell"/>
</dbReference>
<dbReference type="GO" id="GO:0015935">
    <property type="term" value="C:small ribosomal subunit"/>
    <property type="evidence" value="ECO:0007669"/>
    <property type="project" value="InterPro"/>
</dbReference>
<dbReference type="GO" id="GO:0019843">
    <property type="term" value="F:rRNA binding"/>
    <property type="evidence" value="ECO:0007669"/>
    <property type="project" value="UniProtKB-UniRule"/>
</dbReference>
<dbReference type="GO" id="GO:0003735">
    <property type="term" value="F:structural constituent of ribosome"/>
    <property type="evidence" value="ECO:0007669"/>
    <property type="project" value="InterPro"/>
</dbReference>
<dbReference type="GO" id="GO:0042274">
    <property type="term" value="P:ribosomal small subunit biogenesis"/>
    <property type="evidence" value="ECO:0007669"/>
    <property type="project" value="TreeGrafter"/>
</dbReference>
<dbReference type="GO" id="GO:0006412">
    <property type="term" value="P:translation"/>
    <property type="evidence" value="ECO:0007669"/>
    <property type="project" value="UniProtKB-UniRule"/>
</dbReference>
<dbReference type="CDD" id="cd00165">
    <property type="entry name" value="S4"/>
    <property type="match status" value="1"/>
</dbReference>
<dbReference type="FunFam" id="3.10.290.10:FF:000001">
    <property type="entry name" value="30S ribosomal protein S4"/>
    <property type="match status" value="1"/>
</dbReference>
<dbReference type="FunFam" id="1.10.1050.10:FF:000002">
    <property type="entry name" value="30S ribosomal protein S4, chloroplastic"/>
    <property type="match status" value="1"/>
</dbReference>
<dbReference type="Gene3D" id="1.10.1050.10">
    <property type="entry name" value="Ribosomal Protein S4 Delta 41, Chain A, domain 1"/>
    <property type="match status" value="1"/>
</dbReference>
<dbReference type="Gene3D" id="3.10.290.10">
    <property type="entry name" value="RNA-binding S4 domain"/>
    <property type="match status" value="1"/>
</dbReference>
<dbReference type="HAMAP" id="MF_01306_B">
    <property type="entry name" value="Ribosomal_uS4_B"/>
    <property type="match status" value="1"/>
</dbReference>
<dbReference type="InterPro" id="IPR022801">
    <property type="entry name" value="Ribosomal_uS4"/>
</dbReference>
<dbReference type="InterPro" id="IPR005709">
    <property type="entry name" value="Ribosomal_uS4_bac-type"/>
</dbReference>
<dbReference type="InterPro" id="IPR001912">
    <property type="entry name" value="Ribosomal_uS4_N"/>
</dbReference>
<dbReference type="InterPro" id="IPR002942">
    <property type="entry name" value="S4_RNA-bd"/>
</dbReference>
<dbReference type="InterPro" id="IPR036986">
    <property type="entry name" value="S4_RNA-bd_sf"/>
</dbReference>
<dbReference type="NCBIfam" id="NF003717">
    <property type="entry name" value="PRK05327.1"/>
    <property type="match status" value="1"/>
</dbReference>
<dbReference type="PANTHER" id="PTHR11831">
    <property type="entry name" value="30S 40S RIBOSOMAL PROTEIN"/>
    <property type="match status" value="1"/>
</dbReference>
<dbReference type="PANTHER" id="PTHR11831:SF4">
    <property type="entry name" value="SMALL RIBOSOMAL SUBUNIT PROTEIN US4M"/>
    <property type="match status" value="1"/>
</dbReference>
<dbReference type="Pfam" id="PF00163">
    <property type="entry name" value="Ribosomal_S4"/>
    <property type="match status" value="1"/>
</dbReference>
<dbReference type="Pfam" id="PF01479">
    <property type="entry name" value="S4"/>
    <property type="match status" value="1"/>
</dbReference>
<dbReference type="SMART" id="SM01390">
    <property type="entry name" value="Ribosomal_S4"/>
    <property type="match status" value="1"/>
</dbReference>
<dbReference type="SMART" id="SM00363">
    <property type="entry name" value="S4"/>
    <property type="match status" value="1"/>
</dbReference>
<dbReference type="SUPFAM" id="SSF55174">
    <property type="entry name" value="Alpha-L RNA-binding motif"/>
    <property type="match status" value="1"/>
</dbReference>
<dbReference type="PROSITE" id="PS50889">
    <property type="entry name" value="S4"/>
    <property type="match status" value="1"/>
</dbReference>
<protein>
    <recommendedName>
        <fullName evidence="3">Small ribosomal subunit protein uS4c</fullName>
    </recommendedName>
    <alternativeName>
        <fullName>30S ribosomal protein S4, chloroplastic</fullName>
    </alternativeName>
</protein>
<name>RR4_PINTH</name>